<sequence>MPSFRDDHIIVIQTGSLYHRATFGLAESLEPPTIRVRTRVGKNDNGEYVFTNKEDINMEDPNVKTDETKVETSESTSEQPSNSNVTEEKNMGSSFHSECKVDDFTPLPNEIQPIQRGRVVDWEALKAFWKHLYSLLLKDPNDTTFRYPVCLVIPTYWSLYDRELATQFFFEECQVPGFTIAYEPLMGLYAIGILHGLVIDIGYEKTDITPILDGQIIFTATQQLPLGGRYMTQHLQNLLRESLPTLKSSGQYVSKEDITELFAEQVKCSEIAQVVRDEQDTAKDPVKALTSTNNVEEEDPAEDIGKIIASGQTRAYLAQKEREKNGESEKDEKPDNTDVEFQTIAIEPLGDCIVGRERFKICEPIFHRPSNETVSLPEAIYITIKNYAANYKRRNDLWENIIVLGCGSRIRGFRECLIQQLQFKYQLSGSLEPYYAAQGTDSILGMTTMPPTPYPALINPCKILPDYFPSWKPDAGTNAMFEELAFLGGSIVAKTSFNESVSSHYVTLEEYAQHGPTAIHTKQ</sequence>
<feature type="chain" id="PRO_0000310305" description="SWI/SNF and RSC complexes subunit arp9">
    <location>
        <begin position="1"/>
        <end position="523"/>
    </location>
</feature>
<feature type="region of interest" description="Disordered" evidence="2">
    <location>
        <begin position="56"/>
        <end position="92"/>
    </location>
</feature>
<feature type="region of interest" description="Disordered" evidence="2">
    <location>
        <begin position="319"/>
        <end position="339"/>
    </location>
</feature>
<feature type="compositionally biased region" description="Basic and acidic residues" evidence="2">
    <location>
        <begin position="56"/>
        <end position="72"/>
    </location>
</feature>
<feature type="compositionally biased region" description="Polar residues" evidence="2">
    <location>
        <begin position="79"/>
        <end position="92"/>
    </location>
</feature>
<feature type="compositionally biased region" description="Basic and acidic residues" evidence="2">
    <location>
        <begin position="319"/>
        <end position="336"/>
    </location>
</feature>
<gene>
    <name type="primary">arp9</name>
    <name type="ORF">SPAC1071.06</name>
</gene>
<dbReference type="EMBL" id="CU329670">
    <property type="protein sequence ID" value="CAB59882.1"/>
    <property type="molecule type" value="Genomic_DNA"/>
</dbReference>
<dbReference type="PIR" id="T37488">
    <property type="entry name" value="T37488"/>
</dbReference>
<dbReference type="RefSeq" id="NP_594356.1">
    <property type="nucleotide sequence ID" value="NM_001019777.2"/>
</dbReference>
<dbReference type="BioGRID" id="278040">
    <property type="interactions" value="17"/>
</dbReference>
<dbReference type="ComplexPortal" id="CPX-6362">
    <property type="entry name" value="SWI/SNF chromatin remodelling complex"/>
</dbReference>
<dbReference type="ComplexPortal" id="CPX-6363">
    <property type="entry name" value="RSC chromatin remodelling complex"/>
</dbReference>
<dbReference type="DIP" id="DIP-48381N"/>
<dbReference type="FunCoup" id="Q9UTQ7">
    <property type="interactions" value="23"/>
</dbReference>
<dbReference type="IntAct" id="Q9UTQ7">
    <property type="interactions" value="18"/>
</dbReference>
<dbReference type="STRING" id="284812.Q9UTQ7"/>
<dbReference type="iPTMnet" id="Q9UTQ7"/>
<dbReference type="PaxDb" id="4896-SPAC1071.06.1"/>
<dbReference type="EnsemblFungi" id="SPAC1071.06.1">
    <property type="protein sequence ID" value="SPAC1071.06.1:pep"/>
    <property type="gene ID" value="SPAC1071.06"/>
</dbReference>
<dbReference type="GeneID" id="2541540"/>
<dbReference type="KEGG" id="spo:2541540"/>
<dbReference type="PomBase" id="SPAC1071.06">
    <property type="gene designation" value="arp9"/>
</dbReference>
<dbReference type="VEuPathDB" id="FungiDB:SPAC1071.06"/>
<dbReference type="eggNOG" id="KOG0676">
    <property type="taxonomic scope" value="Eukaryota"/>
</dbReference>
<dbReference type="HOGENOM" id="CLU_531127_0_0_1"/>
<dbReference type="InParanoid" id="Q9UTQ7"/>
<dbReference type="OMA" id="RYIFEKT"/>
<dbReference type="PhylomeDB" id="Q9UTQ7"/>
<dbReference type="Reactome" id="R-SPO-114608">
    <property type="pathway name" value="Platelet degranulation"/>
</dbReference>
<dbReference type="Reactome" id="R-SPO-2029482">
    <property type="pathway name" value="Regulation of actin dynamics for phagocytic cup formation"/>
</dbReference>
<dbReference type="Reactome" id="R-SPO-5626467">
    <property type="pathway name" value="RHO GTPases activate IQGAPs"/>
</dbReference>
<dbReference type="Reactome" id="R-SPO-5663213">
    <property type="pathway name" value="RHO GTPases Activate WASPs and WAVEs"/>
</dbReference>
<dbReference type="Reactome" id="R-SPO-8856828">
    <property type="pathway name" value="Clathrin-mediated endocytosis"/>
</dbReference>
<dbReference type="PRO" id="PR:Q9UTQ7"/>
<dbReference type="Proteomes" id="UP000002485">
    <property type="component" value="Chromosome I"/>
</dbReference>
<dbReference type="GO" id="GO:0015629">
    <property type="term" value="C:actin cytoskeleton"/>
    <property type="evidence" value="ECO:0000318"/>
    <property type="project" value="GO_Central"/>
</dbReference>
<dbReference type="GO" id="GO:0000785">
    <property type="term" value="C:chromatin"/>
    <property type="evidence" value="ECO:0000303"/>
    <property type="project" value="ComplexPortal"/>
</dbReference>
<dbReference type="GO" id="GO:0005829">
    <property type="term" value="C:cytosol"/>
    <property type="evidence" value="ECO:0007005"/>
    <property type="project" value="PomBase"/>
</dbReference>
<dbReference type="GO" id="GO:0005634">
    <property type="term" value="C:nucleus"/>
    <property type="evidence" value="ECO:0007005"/>
    <property type="project" value="PomBase"/>
</dbReference>
<dbReference type="GO" id="GO:0016586">
    <property type="term" value="C:RSC-type complex"/>
    <property type="evidence" value="ECO:0000314"/>
    <property type="project" value="PomBase"/>
</dbReference>
<dbReference type="GO" id="GO:0016514">
    <property type="term" value="C:SWI/SNF complex"/>
    <property type="evidence" value="ECO:0000314"/>
    <property type="project" value="PomBase"/>
</dbReference>
<dbReference type="GO" id="GO:0006338">
    <property type="term" value="P:chromatin remodeling"/>
    <property type="evidence" value="ECO:0000303"/>
    <property type="project" value="ComplexPortal"/>
</dbReference>
<dbReference type="GO" id="GO:0006357">
    <property type="term" value="P:regulation of transcription by RNA polymerase II"/>
    <property type="evidence" value="ECO:0000304"/>
    <property type="project" value="PomBase"/>
</dbReference>
<dbReference type="GO" id="GO:0045815">
    <property type="term" value="P:transcription initiation-coupled chromatin remodeling"/>
    <property type="evidence" value="ECO:0000305"/>
    <property type="project" value="PomBase"/>
</dbReference>
<dbReference type="CDD" id="cd10208">
    <property type="entry name" value="ASKHA_NBD_ScArp9-like"/>
    <property type="match status" value="1"/>
</dbReference>
<dbReference type="Gene3D" id="3.30.420.40">
    <property type="match status" value="4"/>
</dbReference>
<dbReference type="InterPro" id="IPR004000">
    <property type="entry name" value="Actin"/>
</dbReference>
<dbReference type="InterPro" id="IPR043129">
    <property type="entry name" value="ATPase_NBD"/>
</dbReference>
<dbReference type="PANTHER" id="PTHR11937">
    <property type="entry name" value="ACTIN"/>
    <property type="match status" value="1"/>
</dbReference>
<dbReference type="Pfam" id="PF00022">
    <property type="entry name" value="Actin"/>
    <property type="match status" value="1"/>
</dbReference>
<dbReference type="SMART" id="SM00268">
    <property type="entry name" value="ACTIN"/>
    <property type="match status" value="1"/>
</dbReference>
<dbReference type="SUPFAM" id="SSF53067">
    <property type="entry name" value="Actin-like ATPase domain"/>
    <property type="match status" value="2"/>
</dbReference>
<proteinExistence type="evidence at protein level"/>
<name>ARP9_SCHPO</name>
<reference key="1">
    <citation type="journal article" date="2002" name="Nature">
        <title>The genome sequence of Schizosaccharomyces pombe.</title>
        <authorList>
            <person name="Wood V."/>
            <person name="Gwilliam R."/>
            <person name="Rajandream M.A."/>
            <person name="Lyne M.H."/>
            <person name="Lyne R."/>
            <person name="Stewart A."/>
            <person name="Sgouros J.G."/>
            <person name="Peat N."/>
            <person name="Hayles J."/>
            <person name="Baker S.G."/>
            <person name="Basham D."/>
            <person name="Bowman S."/>
            <person name="Brooks K."/>
            <person name="Brown D."/>
            <person name="Brown S."/>
            <person name="Chillingworth T."/>
            <person name="Churcher C.M."/>
            <person name="Collins M."/>
            <person name="Connor R."/>
            <person name="Cronin A."/>
            <person name="Davis P."/>
            <person name="Feltwell T."/>
            <person name="Fraser A."/>
            <person name="Gentles S."/>
            <person name="Goble A."/>
            <person name="Hamlin N."/>
            <person name="Harris D.E."/>
            <person name="Hidalgo J."/>
            <person name="Hodgson G."/>
            <person name="Holroyd S."/>
            <person name="Hornsby T."/>
            <person name="Howarth S."/>
            <person name="Huckle E.J."/>
            <person name="Hunt S."/>
            <person name="Jagels K."/>
            <person name="James K.D."/>
            <person name="Jones L."/>
            <person name="Jones M."/>
            <person name="Leather S."/>
            <person name="McDonald S."/>
            <person name="McLean J."/>
            <person name="Mooney P."/>
            <person name="Moule S."/>
            <person name="Mungall K.L."/>
            <person name="Murphy L.D."/>
            <person name="Niblett D."/>
            <person name="Odell C."/>
            <person name="Oliver K."/>
            <person name="O'Neil S."/>
            <person name="Pearson D."/>
            <person name="Quail M.A."/>
            <person name="Rabbinowitsch E."/>
            <person name="Rutherford K.M."/>
            <person name="Rutter S."/>
            <person name="Saunders D."/>
            <person name="Seeger K."/>
            <person name="Sharp S."/>
            <person name="Skelton J."/>
            <person name="Simmonds M.N."/>
            <person name="Squares R."/>
            <person name="Squares S."/>
            <person name="Stevens K."/>
            <person name="Taylor K."/>
            <person name="Taylor R.G."/>
            <person name="Tivey A."/>
            <person name="Walsh S.V."/>
            <person name="Warren T."/>
            <person name="Whitehead S."/>
            <person name="Woodward J.R."/>
            <person name="Volckaert G."/>
            <person name="Aert R."/>
            <person name="Robben J."/>
            <person name="Grymonprez B."/>
            <person name="Weltjens I."/>
            <person name="Vanstreels E."/>
            <person name="Rieger M."/>
            <person name="Schaefer M."/>
            <person name="Mueller-Auer S."/>
            <person name="Gabel C."/>
            <person name="Fuchs M."/>
            <person name="Duesterhoeft A."/>
            <person name="Fritzc C."/>
            <person name="Holzer E."/>
            <person name="Moestl D."/>
            <person name="Hilbert H."/>
            <person name="Borzym K."/>
            <person name="Langer I."/>
            <person name="Beck A."/>
            <person name="Lehrach H."/>
            <person name="Reinhardt R."/>
            <person name="Pohl T.M."/>
            <person name="Eger P."/>
            <person name="Zimmermann W."/>
            <person name="Wedler H."/>
            <person name="Wambutt R."/>
            <person name="Purnelle B."/>
            <person name="Goffeau A."/>
            <person name="Cadieu E."/>
            <person name="Dreano S."/>
            <person name="Gloux S."/>
            <person name="Lelaure V."/>
            <person name="Mottier S."/>
            <person name="Galibert F."/>
            <person name="Aves S.J."/>
            <person name="Xiang Z."/>
            <person name="Hunt C."/>
            <person name="Moore K."/>
            <person name="Hurst S.M."/>
            <person name="Lucas M."/>
            <person name="Rochet M."/>
            <person name="Gaillardin C."/>
            <person name="Tallada V.A."/>
            <person name="Garzon A."/>
            <person name="Thode G."/>
            <person name="Daga R.R."/>
            <person name="Cruzado L."/>
            <person name="Jimenez J."/>
            <person name="Sanchez M."/>
            <person name="del Rey F."/>
            <person name="Benito J."/>
            <person name="Dominguez A."/>
            <person name="Revuelta J.L."/>
            <person name="Moreno S."/>
            <person name="Armstrong J."/>
            <person name="Forsburg S.L."/>
            <person name="Cerutti L."/>
            <person name="Lowe T."/>
            <person name="McCombie W.R."/>
            <person name="Paulsen I."/>
            <person name="Potashkin J."/>
            <person name="Shpakovski G.V."/>
            <person name="Ussery D."/>
            <person name="Barrell B.G."/>
            <person name="Nurse P."/>
        </authorList>
    </citation>
    <scope>NUCLEOTIDE SEQUENCE [LARGE SCALE GENOMIC DNA]</scope>
    <source>
        <strain>972 / ATCC 24843</strain>
    </source>
</reference>
<reference key="2">
    <citation type="journal article" date="2006" name="Nat. Biotechnol.">
        <title>ORFeome cloning and global analysis of protein localization in the fission yeast Schizosaccharomyces pombe.</title>
        <authorList>
            <person name="Matsuyama A."/>
            <person name="Arai R."/>
            <person name="Yashiroda Y."/>
            <person name="Shirai A."/>
            <person name="Kamata A."/>
            <person name="Sekido S."/>
            <person name="Kobayashi Y."/>
            <person name="Hashimoto A."/>
            <person name="Hamamoto M."/>
            <person name="Hiraoka Y."/>
            <person name="Horinouchi S."/>
            <person name="Yoshida M."/>
        </authorList>
    </citation>
    <scope>SUBCELLULAR LOCATION [LARGE SCALE ANALYSIS]</scope>
</reference>
<reference key="3">
    <citation type="journal article" date="2008" name="Nat. Struct. Mol. Biol.">
        <title>Fission yeast SWI/SNF and RSC complexes show compositional and functional differences from budding yeast.</title>
        <authorList>
            <person name="Monahan B.J."/>
            <person name="Villen J."/>
            <person name="Marguerat S."/>
            <person name="Baehler J."/>
            <person name="Gygi S.P."/>
            <person name="Winston F."/>
        </authorList>
    </citation>
    <scope>IDENTIFICATION IN THE SWI/SNF AND RSC COMPLEXES</scope>
    <scope>FUNCTION OF THE SWI/SNF AND RSC COMPLEXES</scope>
    <scope>IDENTIFICATION BY MASS SPECTROMETRY</scope>
</reference>
<comment type="function">
    <text evidence="4">Component of the chromatin structure remodeling complex (RSC), which is involved in transcription regulation and nucleosome positioning. Controls particularly membrane and organelle development genes. Part of the SWI/SNF complex, an ATP-dependent chromatin remodeling complex, required for the positive and negative regulation of gene expression of a large number of genes. It changes chromatin structure by altering DNA-histone contacts within a nucleosome, leading eventually to a change in nucleosome position, thus facilitating or repressing binding of gene-specific transcription factors.</text>
</comment>
<comment type="subunit">
    <text evidence="1 4">Component of the RSC complex composed of at least arp9, arp42, rsc1, rsc4, rsc7, rsc9, rsc58, sfh1, snf21, ssr1, ssr2, ssr3 and ssr4. The complex interacts with histone and histone variant components of centromeric chromatin (By similarity). Component of the SWI/SNF global transcription activator complex composed of at least arp9, arp42, snf5, snf22, snf30, sbf59, sol1, ssr1, ssr2, ssr3, ssr4 and tfg3.</text>
</comment>
<comment type="subcellular location">
    <subcellularLocation>
        <location evidence="3">Cytoplasm</location>
    </subcellularLocation>
    <subcellularLocation>
        <location evidence="3">Nucleus</location>
    </subcellularLocation>
</comment>
<comment type="similarity">
    <text evidence="5">Belongs to the actin family.</text>
</comment>
<protein>
    <recommendedName>
        <fullName>SWI/SNF and RSC complexes subunit arp9</fullName>
    </recommendedName>
    <alternativeName>
        <fullName>Actin-like protein arp9</fullName>
    </alternativeName>
    <alternativeName>
        <fullName>Actin-related protein 9</fullName>
    </alternativeName>
    <alternativeName>
        <fullName>Chromatin structure-remodeling complex subunit arp9</fullName>
    </alternativeName>
</protein>
<accession>Q9UTQ7</accession>
<evidence type="ECO:0000250" key="1"/>
<evidence type="ECO:0000256" key="2">
    <source>
        <dbReference type="SAM" id="MobiDB-lite"/>
    </source>
</evidence>
<evidence type="ECO:0000269" key="3">
    <source>
    </source>
</evidence>
<evidence type="ECO:0000269" key="4">
    <source>
    </source>
</evidence>
<evidence type="ECO:0000305" key="5"/>
<organism>
    <name type="scientific">Schizosaccharomyces pombe (strain 972 / ATCC 24843)</name>
    <name type="common">Fission yeast</name>
    <dbReference type="NCBI Taxonomy" id="284812"/>
    <lineage>
        <taxon>Eukaryota</taxon>
        <taxon>Fungi</taxon>
        <taxon>Dikarya</taxon>
        <taxon>Ascomycota</taxon>
        <taxon>Taphrinomycotina</taxon>
        <taxon>Schizosaccharomycetes</taxon>
        <taxon>Schizosaccharomycetales</taxon>
        <taxon>Schizosaccharomycetaceae</taxon>
        <taxon>Schizosaccharomyces</taxon>
    </lineage>
</organism>
<keyword id="KW-0156">Chromatin regulator</keyword>
<keyword id="KW-0963">Cytoplasm</keyword>
<keyword id="KW-0539">Nucleus</keyword>
<keyword id="KW-1185">Reference proteome</keyword>
<keyword id="KW-0804">Transcription</keyword>
<keyword id="KW-0805">Transcription regulation</keyword>